<accession>Q32GM1</accession>
<sequence length="315" mass="34814">MKIIIFRVLTFFFVIFSVNVVAKEFTLDFSTAKTYVDSLNVIRSAIGTPLQTISSGGTSLLMIDSGTGDNLFAVDVRGIDPEEGRFNNLRLIVERNNLYVTGFVNRTNNVFYRFADFSHVTFPGTTAVTLSGDSSYTTLQRVAGISRTGMQINRHSLTTSYLDLMSHSGTSLTQSVARAMLRFVTVTAEALRFRQIQRGFRTTLDDLSGRSYVMTAEDVDLTLNWGRLSSVLPDYHGQDSVRVGRISFGSINAILGSVALILNCHHHASRVARMASDEFPSMCPADGRVRGITHNKILWDSSTLGAILMRRTISS</sequence>
<proteinExistence type="inferred from homology"/>
<comment type="function">
    <text evidence="1">The A subunit is responsible for inhibiting protein synthesis through the catalytic inactivation of 60S ribosomal subunits. After endocytosis, the A subunit is cleaved by furin in two fragments, A1 and A2: A1 is the catalytically active fragment, and A2 is essential for holotoxin assembly with the B subunits (By similarity).</text>
</comment>
<comment type="catalytic activity">
    <reaction>
        <text>Endohydrolysis of the N-glycosidic bond at one specific adenosine on the 28S rRNA.</text>
        <dbReference type="EC" id="3.2.2.22"/>
    </reaction>
</comment>
<comment type="subunit">
    <text evidence="1">Shiga toxin contains a single subunit A and five copies of subunit B.</text>
</comment>
<comment type="similarity">
    <text evidence="3">Belongs to the ribosome-inactivating protein family.</text>
</comment>
<keyword id="KW-1015">Disulfide bond</keyword>
<keyword id="KW-0378">Hydrolase</keyword>
<keyword id="KW-0652">Protein synthesis inhibitor</keyword>
<keyword id="KW-1185">Reference proteome</keyword>
<keyword id="KW-0732">Signal</keyword>
<keyword id="KW-0800">Toxin</keyword>
<keyword id="KW-0843">Virulence</keyword>
<feature type="signal peptide" evidence="2">
    <location>
        <begin position="1"/>
        <end position="22"/>
    </location>
</feature>
<feature type="chain" id="PRO_0000312303" description="Shiga toxin subunit A">
    <location>
        <begin position="23"/>
        <end position="315"/>
    </location>
</feature>
<feature type="region of interest" description="A1">
    <location>
        <begin position="23"/>
        <end position="273"/>
    </location>
</feature>
<feature type="region of interest" description="A2">
    <location>
        <begin position="274"/>
        <end position="315"/>
    </location>
</feature>
<feature type="active site" evidence="1">
    <location>
        <position position="189"/>
    </location>
</feature>
<feature type="site" description="Cleavage; by furin" evidence="1">
    <location>
        <begin position="273"/>
        <end position="274"/>
    </location>
</feature>
<feature type="disulfide bond" evidence="1">
    <location>
        <begin position="264"/>
        <end position="283"/>
    </location>
</feature>
<evidence type="ECO:0000250" key="1"/>
<evidence type="ECO:0000255" key="2"/>
<evidence type="ECO:0000305" key="3"/>
<organism>
    <name type="scientific">Shigella dysenteriae serotype 1 (strain Sd197)</name>
    <dbReference type="NCBI Taxonomy" id="300267"/>
    <lineage>
        <taxon>Bacteria</taxon>
        <taxon>Pseudomonadati</taxon>
        <taxon>Pseudomonadota</taxon>
        <taxon>Gammaproteobacteria</taxon>
        <taxon>Enterobacterales</taxon>
        <taxon>Enterobacteriaceae</taxon>
        <taxon>Shigella</taxon>
    </lineage>
</organism>
<name>STXA_SHIDS</name>
<protein>
    <recommendedName>
        <fullName>Shiga toxin subunit A</fullName>
        <ecNumber>3.2.2.22</ecNumber>
    </recommendedName>
</protein>
<gene>
    <name type="primary">stxA</name>
    <name type="ordered locus">SDY_1389</name>
</gene>
<reference key="1">
    <citation type="journal article" date="2005" name="Nucleic Acids Res.">
        <title>Genome dynamics and diversity of Shigella species, the etiologic agents of bacillary dysentery.</title>
        <authorList>
            <person name="Yang F."/>
            <person name="Yang J."/>
            <person name="Zhang X."/>
            <person name="Chen L."/>
            <person name="Jiang Y."/>
            <person name="Yan Y."/>
            <person name="Tang X."/>
            <person name="Wang J."/>
            <person name="Xiong Z."/>
            <person name="Dong J."/>
            <person name="Xue Y."/>
            <person name="Zhu Y."/>
            <person name="Xu X."/>
            <person name="Sun L."/>
            <person name="Chen S."/>
            <person name="Nie H."/>
            <person name="Peng J."/>
            <person name="Xu J."/>
            <person name="Wang Y."/>
            <person name="Yuan Z."/>
            <person name="Wen Y."/>
            <person name="Yao Z."/>
            <person name="Shen Y."/>
            <person name="Qiang B."/>
            <person name="Hou Y."/>
            <person name="Yu J."/>
            <person name="Jin Q."/>
        </authorList>
    </citation>
    <scope>NUCLEOTIDE SEQUENCE [LARGE SCALE GENOMIC DNA]</scope>
    <source>
        <strain>Sd197</strain>
    </source>
</reference>
<dbReference type="EC" id="3.2.2.22"/>
<dbReference type="EMBL" id="CP000034">
    <property type="protein sequence ID" value="ABB61534.1"/>
    <property type="molecule type" value="Genomic_DNA"/>
</dbReference>
<dbReference type="RefSeq" id="YP_403025.1">
    <property type="nucleotide sequence ID" value="NC_007606.1"/>
</dbReference>
<dbReference type="SMR" id="Q32GM1"/>
<dbReference type="STRING" id="300267.SDY_1389"/>
<dbReference type="EnsemblBacteria" id="ABB61534">
    <property type="protein sequence ID" value="ABB61534"/>
    <property type="gene ID" value="SDY_1389"/>
</dbReference>
<dbReference type="KEGG" id="sdy:SDY_1389"/>
<dbReference type="PATRIC" id="fig|300267.13.peg.1650"/>
<dbReference type="HOGENOM" id="CLU_870802_0_0_6"/>
<dbReference type="Proteomes" id="UP000002716">
    <property type="component" value="Chromosome"/>
</dbReference>
<dbReference type="GO" id="GO:0030598">
    <property type="term" value="F:rRNA N-glycosylase activity"/>
    <property type="evidence" value="ECO:0007669"/>
    <property type="project" value="UniProtKB-EC"/>
</dbReference>
<dbReference type="GO" id="GO:0090729">
    <property type="term" value="F:toxin activity"/>
    <property type="evidence" value="ECO:0007669"/>
    <property type="project" value="UniProtKB-KW"/>
</dbReference>
<dbReference type="GO" id="GO:0017148">
    <property type="term" value="P:negative regulation of translation"/>
    <property type="evidence" value="ECO:0007669"/>
    <property type="project" value="UniProtKB-KW"/>
</dbReference>
<dbReference type="GO" id="GO:0141130">
    <property type="term" value="P:symbiont-mediated inactivation of host ribosome"/>
    <property type="evidence" value="ECO:0000269"/>
    <property type="project" value="SigSci"/>
</dbReference>
<dbReference type="Gene3D" id="3.40.420.10">
    <property type="entry name" value="Ricin (A subunit), domain 1"/>
    <property type="match status" value="1"/>
</dbReference>
<dbReference type="Gene3D" id="4.10.470.10">
    <property type="entry name" value="Ricin (A Subunit), domain 2"/>
    <property type="match status" value="1"/>
</dbReference>
<dbReference type="InterPro" id="IPR036041">
    <property type="entry name" value="Ribosome-inact_prot_sf"/>
</dbReference>
<dbReference type="InterPro" id="IPR001574">
    <property type="entry name" value="Ribosome_inactivat_prot"/>
</dbReference>
<dbReference type="InterPro" id="IPR017988">
    <property type="entry name" value="Ribosome_inactivat_prot_CS"/>
</dbReference>
<dbReference type="InterPro" id="IPR016138">
    <property type="entry name" value="Ribosome_inactivat_prot_sub1"/>
</dbReference>
<dbReference type="InterPro" id="IPR016139">
    <property type="entry name" value="Ribosome_inactivat_prot_sub2"/>
</dbReference>
<dbReference type="InterPro" id="IPR016331">
    <property type="entry name" value="Shiga-like_toxin_subunit_A"/>
</dbReference>
<dbReference type="NCBIfam" id="NF041694">
    <property type="entry name" value="Shig_StxA_1a"/>
    <property type="match status" value="1"/>
</dbReference>
<dbReference type="NCBIfam" id="NF033658">
    <property type="entry name" value="Shiga_Stx1A"/>
    <property type="match status" value="1"/>
</dbReference>
<dbReference type="PANTHER" id="PTHR33453">
    <property type="match status" value="1"/>
</dbReference>
<dbReference type="PANTHER" id="PTHR33453:SF34">
    <property type="entry name" value="RIBOSOME-INACTIVATING PROTEIN"/>
    <property type="match status" value="1"/>
</dbReference>
<dbReference type="Pfam" id="PF00161">
    <property type="entry name" value="RIP"/>
    <property type="match status" value="1"/>
</dbReference>
<dbReference type="PIRSF" id="PIRSF001924">
    <property type="entry name" value="Shigella_toxin_subunit_A"/>
    <property type="match status" value="1"/>
</dbReference>
<dbReference type="SUPFAM" id="SSF56371">
    <property type="entry name" value="Ribosome inactivating proteins (RIP)"/>
    <property type="match status" value="1"/>
</dbReference>
<dbReference type="PROSITE" id="PS00275">
    <property type="entry name" value="SHIGA_RICIN"/>
    <property type="match status" value="1"/>
</dbReference>